<evidence type="ECO:0000255" key="1">
    <source>
        <dbReference type="HAMAP-Rule" id="MF_00038"/>
    </source>
</evidence>
<name>MRAY_ACIAD</name>
<feature type="chain" id="PRO_0000108768" description="Phospho-N-acetylmuramoyl-pentapeptide-transferase">
    <location>
        <begin position="1"/>
        <end position="372"/>
    </location>
</feature>
<feature type="transmembrane region" description="Helical" evidence="1">
    <location>
        <begin position="25"/>
        <end position="45"/>
    </location>
</feature>
<feature type="transmembrane region" description="Helical" evidence="1">
    <location>
        <begin position="73"/>
        <end position="93"/>
    </location>
</feature>
<feature type="transmembrane region" description="Helical" evidence="1">
    <location>
        <begin position="98"/>
        <end position="118"/>
    </location>
</feature>
<feature type="transmembrane region" description="Helical" evidence="1">
    <location>
        <begin position="134"/>
        <end position="154"/>
    </location>
</feature>
<feature type="transmembrane region" description="Helical" evidence="1">
    <location>
        <begin position="176"/>
        <end position="196"/>
    </location>
</feature>
<feature type="transmembrane region" description="Helical" evidence="1">
    <location>
        <begin position="211"/>
        <end position="231"/>
    </location>
</feature>
<feature type="transmembrane region" description="Helical" evidence="1">
    <location>
        <begin position="251"/>
        <end position="271"/>
    </location>
</feature>
<feature type="transmembrane region" description="Helical" evidence="1">
    <location>
        <begin position="275"/>
        <end position="295"/>
    </location>
</feature>
<feature type="transmembrane region" description="Helical" evidence="1">
    <location>
        <begin position="300"/>
        <end position="320"/>
    </location>
</feature>
<feature type="transmembrane region" description="Helical" evidence="1">
    <location>
        <begin position="349"/>
        <end position="369"/>
    </location>
</feature>
<comment type="function">
    <text evidence="1">Catalyzes the initial step of the lipid cycle reactions in the biosynthesis of the cell wall peptidoglycan: transfers peptidoglycan precursor phospho-MurNAc-pentapeptide from UDP-MurNAc-pentapeptide onto the lipid carrier undecaprenyl phosphate, yielding undecaprenyl-pyrophosphoryl-MurNAc-pentapeptide, known as lipid I.</text>
</comment>
<comment type="catalytic activity">
    <reaction evidence="1">
        <text>UDP-N-acetyl-alpha-D-muramoyl-L-alanyl-gamma-D-glutamyl-meso-2,6-diaminopimeloyl-D-alanyl-D-alanine + di-trans,octa-cis-undecaprenyl phosphate = di-trans,octa-cis-undecaprenyl diphospho-N-acetyl-alpha-D-muramoyl-L-alanyl-D-glutamyl-meso-2,6-diaminopimeloyl-D-alanyl-D-alanine + UMP</text>
        <dbReference type="Rhea" id="RHEA:28386"/>
        <dbReference type="ChEBI" id="CHEBI:57865"/>
        <dbReference type="ChEBI" id="CHEBI:60392"/>
        <dbReference type="ChEBI" id="CHEBI:61386"/>
        <dbReference type="ChEBI" id="CHEBI:61387"/>
        <dbReference type="EC" id="2.7.8.13"/>
    </reaction>
</comment>
<comment type="cofactor">
    <cofactor evidence="1">
        <name>Mg(2+)</name>
        <dbReference type="ChEBI" id="CHEBI:18420"/>
    </cofactor>
</comment>
<comment type="pathway">
    <text evidence="1">Cell wall biogenesis; peptidoglycan biosynthesis.</text>
</comment>
<comment type="subcellular location">
    <subcellularLocation>
        <location evidence="1">Cell inner membrane</location>
        <topology evidence="1">Multi-pass membrane protein</topology>
    </subcellularLocation>
</comment>
<comment type="similarity">
    <text evidence="1">Belongs to the glycosyltransferase 4 family. MraY subfamily.</text>
</comment>
<keyword id="KW-0131">Cell cycle</keyword>
<keyword id="KW-0132">Cell division</keyword>
<keyword id="KW-0997">Cell inner membrane</keyword>
<keyword id="KW-1003">Cell membrane</keyword>
<keyword id="KW-0133">Cell shape</keyword>
<keyword id="KW-0961">Cell wall biogenesis/degradation</keyword>
<keyword id="KW-0460">Magnesium</keyword>
<keyword id="KW-0472">Membrane</keyword>
<keyword id="KW-0479">Metal-binding</keyword>
<keyword id="KW-0573">Peptidoglycan synthesis</keyword>
<keyword id="KW-0808">Transferase</keyword>
<keyword id="KW-0812">Transmembrane</keyword>
<keyword id="KW-1133">Transmembrane helix</keyword>
<gene>
    <name evidence="1" type="primary">mraY</name>
    <name type="ordered locus">ACIAD3363</name>
</gene>
<accession>Q6F7D6</accession>
<sequence length="372" mass="40888">MLLWLFEHLSGYNSSFQVIRYLTLRSLLSILTSLAIGLMLGPVMIRKLQALKYGQAVSSFAPENHAKKMGTPTMGGVLILMSIGISTLLWADLSNPYVWIVLGVMVVFGAVGWADDWIKIRYKDNAGLPARKKFFWTSVASLGAGISLYVIAQNQPNPIHTANMLDLLIPFFKNLSIPLSAVPLGIAFIIFTYLVINGASNAVNLTDGLDGLAIMPIVMVAAGLGVFAYLAGDIRFANYLHIPYVKYTSELVVICSAMVGAGLAFLWYNAHPAQIFMGDVGALALGAMLGTIAVMVRQEIVFAIMGGVFVMEAISVFLQIGSLRMRNKRVFLMAPLHHHYEKQGWKETQVVTRFWIITIMLVVLGLMTLKLR</sequence>
<reference key="1">
    <citation type="journal article" date="2004" name="Nucleic Acids Res.">
        <title>Unique features revealed by the genome sequence of Acinetobacter sp. ADP1, a versatile and naturally transformation competent bacterium.</title>
        <authorList>
            <person name="Barbe V."/>
            <person name="Vallenet D."/>
            <person name="Fonknechten N."/>
            <person name="Kreimeyer A."/>
            <person name="Oztas S."/>
            <person name="Labarre L."/>
            <person name="Cruveiller S."/>
            <person name="Robert C."/>
            <person name="Duprat S."/>
            <person name="Wincker P."/>
            <person name="Ornston L.N."/>
            <person name="Weissenbach J."/>
            <person name="Marliere P."/>
            <person name="Cohen G.N."/>
            <person name="Medigue C."/>
        </authorList>
    </citation>
    <scope>NUCLEOTIDE SEQUENCE [LARGE SCALE GENOMIC DNA]</scope>
    <source>
        <strain>ATCC 33305 / BD413 / ADP1</strain>
    </source>
</reference>
<protein>
    <recommendedName>
        <fullName evidence="1">Phospho-N-acetylmuramoyl-pentapeptide-transferase</fullName>
        <ecNumber evidence="1">2.7.8.13</ecNumber>
    </recommendedName>
    <alternativeName>
        <fullName evidence="1">UDP-MurNAc-pentapeptide phosphotransferase</fullName>
    </alternativeName>
</protein>
<organism>
    <name type="scientific">Acinetobacter baylyi (strain ATCC 33305 / BD413 / ADP1)</name>
    <dbReference type="NCBI Taxonomy" id="62977"/>
    <lineage>
        <taxon>Bacteria</taxon>
        <taxon>Pseudomonadati</taxon>
        <taxon>Pseudomonadota</taxon>
        <taxon>Gammaproteobacteria</taxon>
        <taxon>Moraxellales</taxon>
        <taxon>Moraxellaceae</taxon>
        <taxon>Acinetobacter</taxon>
    </lineage>
</organism>
<dbReference type="EC" id="2.7.8.13" evidence="1"/>
<dbReference type="EMBL" id="CR543861">
    <property type="protein sequence ID" value="CAG70029.1"/>
    <property type="molecule type" value="Genomic_DNA"/>
</dbReference>
<dbReference type="RefSeq" id="WP_004923704.1">
    <property type="nucleotide sequence ID" value="NC_005966.1"/>
</dbReference>
<dbReference type="SMR" id="Q6F7D6"/>
<dbReference type="STRING" id="202950.GCA_001485005_02201"/>
<dbReference type="GeneID" id="45235557"/>
<dbReference type="KEGG" id="aci:ACIAD3363"/>
<dbReference type="eggNOG" id="COG0472">
    <property type="taxonomic scope" value="Bacteria"/>
</dbReference>
<dbReference type="HOGENOM" id="CLU_023982_0_0_6"/>
<dbReference type="OrthoDB" id="9805475at2"/>
<dbReference type="BioCyc" id="ASP62977:ACIAD_RS15210-MONOMER"/>
<dbReference type="UniPathway" id="UPA00219"/>
<dbReference type="Proteomes" id="UP000000430">
    <property type="component" value="Chromosome"/>
</dbReference>
<dbReference type="GO" id="GO:0005886">
    <property type="term" value="C:plasma membrane"/>
    <property type="evidence" value="ECO:0007669"/>
    <property type="project" value="UniProtKB-SubCell"/>
</dbReference>
<dbReference type="GO" id="GO:0046872">
    <property type="term" value="F:metal ion binding"/>
    <property type="evidence" value="ECO:0007669"/>
    <property type="project" value="UniProtKB-KW"/>
</dbReference>
<dbReference type="GO" id="GO:0008963">
    <property type="term" value="F:phospho-N-acetylmuramoyl-pentapeptide-transferase activity"/>
    <property type="evidence" value="ECO:0007669"/>
    <property type="project" value="UniProtKB-UniRule"/>
</dbReference>
<dbReference type="GO" id="GO:0051992">
    <property type="term" value="F:UDP-N-acetylmuramoyl-L-alanyl-D-glutamyl-meso-2,6-diaminopimelyl-D-alanyl-D-alanine:undecaprenyl-phosphate transferase activity"/>
    <property type="evidence" value="ECO:0007669"/>
    <property type="project" value="RHEA"/>
</dbReference>
<dbReference type="GO" id="GO:0051301">
    <property type="term" value="P:cell division"/>
    <property type="evidence" value="ECO:0007669"/>
    <property type="project" value="UniProtKB-KW"/>
</dbReference>
<dbReference type="GO" id="GO:0071555">
    <property type="term" value="P:cell wall organization"/>
    <property type="evidence" value="ECO:0007669"/>
    <property type="project" value="UniProtKB-KW"/>
</dbReference>
<dbReference type="GO" id="GO:0009252">
    <property type="term" value="P:peptidoglycan biosynthetic process"/>
    <property type="evidence" value="ECO:0007669"/>
    <property type="project" value="UniProtKB-UniRule"/>
</dbReference>
<dbReference type="GO" id="GO:0008360">
    <property type="term" value="P:regulation of cell shape"/>
    <property type="evidence" value="ECO:0007669"/>
    <property type="project" value="UniProtKB-KW"/>
</dbReference>
<dbReference type="CDD" id="cd06852">
    <property type="entry name" value="GT_MraY"/>
    <property type="match status" value="1"/>
</dbReference>
<dbReference type="HAMAP" id="MF_00038">
    <property type="entry name" value="MraY"/>
    <property type="match status" value="1"/>
</dbReference>
<dbReference type="InterPro" id="IPR000715">
    <property type="entry name" value="Glycosyl_transferase_4"/>
</dbReference>
<dbReference type="InterPro" id="IPR003524">
    <property type="entry name" value="PNAcMuramoyl-5peptid_Trfase"/>
</dbReference>
<dbReference type="InterPro" id="IPR018480">
    <property type="entry name" value="PNAcMuramoyl-5peptid_Trfase_CS"/>
</dbReference>
<dbReference type="NCBIfam" id="TIGR00445">
    <property type="entry name" value="mraY"/>
    <property type="match status" value="1"/>
</dbReference>
<dbReference type="PANTHER" id="PTHR22926">
    <property type="entry name" value="PHOSPHO-N-ACETYLMURAMOYL-PENTAPEPTIDE-TRANSFERASE"/>
    <property type="match status" value="1"/>
</dbReference>
<dbReference type="PANTHER" id="PTHR22926:SF5">
    <property type="entry name" value="PHOSPHO-N-ACETYLMURAMOYL-PENTAPEPTIDE-TRANSFERASE HOMOLOG"/>
    <property type="match status" value="1"/>
</dbReference>
<dbReference type="Pfam" id="PF00953">
    <property type="entry name" value="Glycos_transf_4"/>
    <property type="match status" value="1"/>
</dbReference>
<dbReference type="PROSITE" id="PS01347">
    <property type="entry name" value="MRAY_1"/>
    <property type="match status" value="1"/>
</dbReference>
<dbReference type="PROSITE" id="PS01348">
    <property type="entry name" value="MRAY_2"/>
    <property type="match status" value="1"/>
</dbReference>
<proteinExistence type="inferred from homology"/>